<organism>
    <name type="scientific">Chara vulgaris</name>
    <name type="common">Common stonewort</name>
    <dbReference type="NCBI Taxonomy" id="55564"/>
    <lineage>
        <taxon>Eukaryota</taxon>
        <taxon>Viridiplantae</taxon>
        <taxon>Streptophyta</taxon>
        <taxon>Charophyceae</taxon>
        <taxon>Charales</taxon>
        <taxon>Characeae</taxon>
        <taxon>Chara</taxon>
    </lineage>
</organism>
<reference key="1">
    <citation type="journal article" date="2006" name="Mol. Biol. Evol.">
        <title>The chloroplast genome sequence of Chara vulgaris sheds new light into the closest green algal relatives of land plants.</title>
        <authorList>
            <person name="Turmel M."/>
            <person name="Otis C."/>
            <person name="Lemieux C."/>
        </authorList>
    </citation>
    <scope>NUCLEOTIDE SEQUENCE [LARGE SCALE GENOMIC DNA]</scope>
</reference>
<evidence type="ECO:0000255" key="1">
    <source>
        <dbReference type="HAMAP-Rule" id="MF_00433"/>
    </source>
</evidence>
<evidence type="ECO:0000305" key="2"/>
<accession>Q1ACI4</accession>
<sequence length="31" mass="3624">MFTVISYLSLLFISFLFALTLFIVLNKIELI</sequence>
<protein>
    <recommendedName>
        <fullName evidence="1">Cytochrome b6-f complex subunit 6</fullName>
    </recommendedName>
    <alternativeName>
        <fullName evidence="1">Cytochrome b6-f complex subunit PetL</fullName>
    </alternativeName>
    <alternativeName>
        <fullName evidence="1">Cytochrome b6-f complex subunit VI</fullName>
    </alternativeName>
</protein>
<geneLocation type="chloroplast"/>
<dbReference type="EMBL" id="DQ229107">
    <property type="protein sequence ID" value="ABA61944.1"/>
    <property type="status" value="ALT_INIT"/>
    <property type="molecule type" value="Genomic_DNA"/>
</dbReference>
<dbReference type="RefSeq" id="YP_635763.1">
    <property type="nucleotide sequence ID" value="NC_008097.1"/>
</dbReference>
<dbReference type="SMR" id="Q1ACI4"/>
<dbReference type="GeneID" id="4100310"/>
<dbReference type="GO" id="GO:0009535">
    <property type="term" value="C:chloroplast thylakoid membrane"/>
    <property type="evidence" value="ECO:0007669"/>
    <property type="project" value="UniProtKB-SubCell"/>
</dbReference>
<dbReference type="GO" id="GO:0009512">
    <property type="term" value="C:cytochrome b6f complex"/>
    <property type="evidence" value="ECO:0007669"/>
    <property type="project" value="InterPro"/>
</dbReference>
<dbReference type="GO" id="GO:0045158">
    <property type="term" value="F:electron transporter, transferring electrons within cytochrome b6/f complex of photosystem II activity"/>
    <property type="evidence" value="ECO:0007669"/>
    <property type="project" value="UniProtKB-UniRule"/>
</dbReference>
<dbReference type="GO" id="GO:0015979">
    <property type="term" value="P:photosynthesis"/>
    <property type="evidence" value="ECO:0007669"/>
    <property type="project" value="UniProtKB-KW"/>
</dbReference>
<dbReference type="HAMAP" id="MF_00433">
    <property type="entry name" value="Cytb6_f_PetL"/>
    <property type="match status" value="1"/>
</dbReference>
<dbReference type="InterPro" id="IPR007802">
    <property type="entry name" value="Cyt_b6/f_cplx_su6"/>
</dbReference>
<name>PETL_CHAVU</name>
<feature type="chain" id="PRO_0000275520" description="Cytochrome b6-f complex subunit 6">
    <location>
        <begin position="1"/>
        <end position="31"/>
    </location>
</feature>
<feature type="transmembrane region" description="Helical" evidence="1">
    <location>
        <begin position="4"/>
        <end position="24"/>
    </location>
</feature>
<gene>
    <name evidence="1" type="primary">petL</name>
</gene>
<keyword id="KW-0150">Chloroplast</keyword>
<keyword id="KW-0249">Electron transport</keyword>
<keyword id="KW-0472">Membrane</keyword>
<keyword id="KW-0602">Photosynthesis</keyword>
<keyword id="KW-0934">Plastid</keyword>
<keyword id="KW-0793">Thylakoid</keyword>
<keyword id="KW-0812">Transmembrane</keyword>
<keyword id="KW-1133">Transmembrane helix</keyword>
<keyword id="KW-0813">Transport</keyword>
<comment type="function">
    <text evidence="1">Component of the cytochrome b6-f complex, which mediates electron transfer between photosystem II (PSII) and photosystem I (PSI), cyclic electron flow around PSI, and state transitions. PetL is important for photoautotrophic growth as well as for electron transfer efficiency and stability of the cytochrome b6-f complex.</text>
</comment>
<comment type="subunit">
    <text evidence="1">The 4 large subunits of the cytochrome b6-f complex are cytochrome b6, subunit IV (17 kDa polypeptide, PetD), cytochrome f and the Rieske protein, while the 4 small subunits are PetG, PetL, PetM and PetN. The complex functions as a dimer.</text>
</comment>
<comment type="subcellular location">
    <subcellularLocation>
        <location evidence="1">Plastid</location>
        <location evidence="1">Chloroplast thylakoid membrane</location>
        <topology evidence="1">Single-pass membrane protein</topology>
    </subcellularLocation>
</comment>
<comment type="similarity">
    <text evidence="1">Belongs to the PetL family.</text>
</comment>
<comment type="sequence caution" evidence="2">
    <conflict type="erroneous initiation">
        <sequence resource="EMBL-CDS" id="ABA61944"/>
    </conflict>
</comment>
<proteinExistence type="inferred from homology"/>